<gene>
    <name type="ordered locus">TV1250</name>
    <name type="ORF">TVG1288366</name>
</gene>
<protein>
    <recommendedName>
        <fullName>UPF0179 protein TV1250</fullName>
    </recommendedName>
</protein>
<organism>
    <name type="scientific">Thermoplasma volcanium (strain ATCC 51530 / DSM 4299 / JCM 9571 / NBRC 15438 / GSS1)</name>
    <dbReference type="NCBI Taxonomy" id="273116"/>
    <lineage>
        <taxon>Archaea</taxon>
        <taxon>Methanobacteriati</taxon>
        <taxon>Thermoplasmatota</taxon>
        <taxon>Thermoplasmata</taxon>
        <taxon>Thermoplasmatales</taxon>
        <taxon>Thermoplasmataceae</taxon>
        <taxon>Thermoplasma</taxon>
    </lineage>
</organism>
<evidence type="ECO:0000305" key="1"/>
<reference key="1">
    <citation type="journal article" date="2000" name="Proc. Natl. Acad. Sci. U.S.A.">
        <title>Archaeal adaptation to higher temperatures revealed by genomic sequence of Thermoplasma volcanium.</title>
        <authorList>
            <person name="Kawashima T."/>
            <person name="Amano N."/>
            <person name="Koike H."/>
            <person name="Makino S."/>
            <person name="Higuchi S."/>
            <person name="Kawashima-Ohya Y."/>
            <person name="Watanabe K."/>
            <person name="Yamazaki M."/>
            <person name="Kanehori K."/>
            <person name="Kawamoto T."/>
            <person name="Nunoshiba T."/>
            <person name="Yamamoto Y."/>
            <person name="Aramaki H."/>
            <person name="Makino K."/>
            <person name="Suzuki M."/>
        </authorList>
    </citation>
    <scope>NUCLEOTIDE SEQUENCE [LARGE SCALE GENOMIC DNA]</scope>
    <source>
        <strain>ATCC 51530 / DSM 4299 / JCM 9571 / NBRC 15438 / GSS1</strain>
    </source>
</reference>
<name>Y1250_THEVO</name>
<comment type="similarity">
    <text evidence="1">Belongs to the UPF0179 family.</text>
</comment>
<proteinExistence type="inferred from homology"/>
<feature type="chain" id="PRO_0000156878" description="UPF0179 protein TV1250">
    <location>
        <begin position="1"/>
        <end position="145"/>
    </location>
</feature>
<dbReference type="EMBL" id="BA000011">
    <property type="protein sequence ID" value="BAB60392.1"/>
    <property type="molecule type" value="Genomic_DNA"/>
</dbReference>
<dbReference type="RefSeq" id="WP_010917484.1">
    <property type="nucleotide sequence ID" value="NC_002689.2"/>
</dbReference>
<dbReference type="STRING" id="273116.gene:9382055"/>
<dbReference type="PaxDb" id="273116-14325488"/>
<dbReference type="GeneID" id="1441366"/>
<dbReference type="KEGG" id="tvo:TVG1288366"/>
<dbReference type="eggNOG" id="arCOG04477">
    <property type="taxonomic scope" value="Archaea"/>
</dbReference>
<dbReference type="HOGENOM" id="CLU_121764_0_0_2"/>
<dbReference type="OrthoDB" id="24613at2157"/>
<dbReference type="PhylomeDB" id="Q979B2"/>
<dbReference type="Proteomes" id="UP000001017">
    <property type="component" value="Chromosome"/>
</dbReference>
<dbReference type="HAMAP" id="MF_00498">
    <property type="entry name" value="UPF0179"/>
    <property type="match status" value="1"/>
</dbReference>
<dbReference type="InterPro" id="IPR005369">
    <property type="entry name" value="UPF0179"/>
</dbReference>
<dbReference type="NCBIfam" id="NF002253">
    <property type="entry name" value="PRK01177.1"/>
    <property type="match status" value="1"/>
</dbReference>
<dbReference type="PANTHER" id="PTHR40699">
    <property type="entry name" value="UPF0179 PROTEIN MJ1627"/>
    <property type="match status" value="1"/>
</dbReference>
<dbReference type="PANTHER" id="PTHR40699:SF1">
    <property type="entry name" value="UPF0179 PROTEIN MJ1627"/>
    <property type="match status" value="1"/>
</dbReference>
<dbReference type="Pfam" id="PF03684">
    <property type="entry name" value="UPF0179"/>
    <property type="match status" value="1"/>
</dbReference>
<dbReference type="PIRSF" id="PIRSF006595">
    <property type="entry name" value="UCP006595"/>
    <property type="match status" value="1"/>
</dbReference>
<accession>Q979B2</accession>
<sequence>MPKISLIGKDLAKEGIEFVFAGPLPTCSDCRVKNVCFNLEQGHKYRVTKVREQLNPCIIFNGDKVNTVEVEELEDFFIIQESKKLQEGAIVTMKSMNCDYITCPNIEKCNLYYQKNDLKVAIKSIGQNVNCPKGFKMKKVQVTYK</sequence>